<comment type="similarity">
    <text evidence="1">Belongs to the UPF0179 family.</text>
</comment>
<proteinExistence type="inferred from homology"/>
<feature type="chain" id="PRO_0000156873" description="UPF0179 protein PYRAB06360">
    <location>
        <begin position="1"/>
        <end position="142"/>
    </location>
</feature>
<gene>
    <name type="ordered locus">PYRAB06360</name>
    <name type="ORF">PAB1908</name>
</gene>
<protein>
    <recommendedName>
        <fullName evidence="1">UPF0179 protein PYRAB06360</fullName>
    </recommendedName>
</protein>
<evidence type="ECO:0000255" key="1">
    <source>
        <dbReference type="HAMAP-Rule" id="MF_00498"/>
    </source>
</evidence>
<dbReference type="EMBL" id="AJ248285">
    <property type="protein sequence ID" value="CAD55658.1"/>
    <property type="molecule type" value="Genomic_DNA"/>
</dbReference>
<dbReference type="EMBL" id="HE613800">
    <property type="protein sequence ID" value="CCE70078.1"/>
    <property type="molecule type" value="Genomic_DNA"/>
</dbReference>
<dbReference type="RefSeq" id="WP_010867807.1">
    <property type="nucleotide sequence ID" value="NC_000868.1"/>
</dbReference>
<dbReference type="STRING" id="272844.PAB1908"/>
<dbReference type="KEGG" id="pab:PAB1908"/>
<dbReference type="PATRIC" id="fig|272844.11.peg.723"/>
<dbReference type="eggNOG" id="arCOG04477">
    <property type="taxonomic scope" value="Archaea"/>
</dbReference>
<dbReference type="HOGENOM" id="CLU_121764_0_0_2"/>
<dbReference type="OrthoDB" id="24613at2157"/>
<dbReference type="PhylomeDB" id="Q8J2Y1"/>
<dbReference type="Proteomes" id="UP000000810">
    <property type="component" value="Chromosome"/>
</dbReference>
<dbReference type="Proteomes" id="UP000009139">
    <property type="component" value="Chromosome"/>
</dbReference>
<dbReference type="HAMAP" id="MF_00498">
    <property type="entry name" value="UPF0179"/>
    <property type="match status" value="1"/>
</dbReference>
<dbReference type="InterPro" id="IPR005369">
    <property type="entry name" value="UPF0179"/>
</dbReference>
<dbReference type="NCBIfam" id="NF002253">
    <property type="entry name" value="PRK01177.1"/>
    <property type="match status" value="1"/>
</dbReference>
<dbReference type="PANTHER" id="PTHR40699">
    <property type="entry name" value="UPF0179 PROTEIN MJ1627"/>
    <property type="match status" value="1"/>
</dbReference>
<dbReference type="PANTHER" id="PTHR40699:SF1">
    <property type="entry name" value="UPF0179 PROTEIN MJ1627"/>
    <property type="match status" value="1"/>
</dbReference>
<dbReference type="Pfam" id="PF03684">
    <property type="entry name" value="UPF0179"/>
    <property type="match status" value="1"/>
</dbReference>
<dbReference type="PIRSF" id="PIRSF006595">
    <property type="entry name" value="UCP006595"/>
    <property type="match status" value="1"/>
</dbReference>
<name>Y636_PYRAB</name>
<sequence>MVITLVGEKLAKPGLEFIYYGPGEPCKTCRLARVCIGNLEPGRRYKVIKVRNIEHPCPLHEGKVRVVEVVEPAIEVLMEPRYAIAGSKLTLRFVDCNDPEKLDLVRPEGLFEGDTVKIIEILGDVECNGRKFKLVKVMREKE</sequence>
<reference key="1">
    <citation type="journal article" date="2003" name="Mol. Microbiol.">
        <title>An integrated analysis of the genome of the hyperthermophilic archaeon Pyrococcus abyssi.</title>
        <authorList>
            <person name="Cohen G.N."/>
            <person name="Barbe V."/>
            <person name="Flament D."/>
            <person name="Galperin M."/>
            <person name="Heilig R."/>
            <person name="Lecompte O."/>
            <person name="Poch O."/>
            <person name="Prieur D."/>
            <person name="Querellou J."/>
            <person name="Ripp R."/>
            <person name="Thierry J.-C."/>
            <person name="Van der Oost J."/>
            <person name="Weissenbach J."/>
            <person name="Zivanovic Y."/>
            <person name="Forterre P."/>
        </authorList>
    </citation>
    <scope>NUCLEOTIDE SEQUENCE [LARGE SCALE GENOMIC DNA]</scope>
    <source>
        <strain>GE5 / Orsay</strain>
    </source>
</reference>
<reference key="2">
    <citation type="journal article" date="2012" name="Curr. Microbiol.">
        <title>Re-annotation of two hyperthermophilic archaea Pyrococcus abyssi GE5 and Pyrococcus furiosus DSM 3638.</title>
        <authorList>
            <person name="Gao J."/>
            <person name="Wang J."/>
        </authorList>
    </citation>
    <scope>GENOME REANNOTATION</scope>
    <source>
        <strain>GE5 / Orsay</strain>
    </source>
</reference>
<accession>Q8J2Y1</accession>
<accession>G8ZJF1</accession>
<organism>
    <name type="scientific">Pyrococcus abyssi (strain GE5 / Orsay)</name>
    <dbReference type="NCBI Taxonomy" id="272844"/>
    <lineage>
        <taxon>Archaea</taxon>
        <taxon>Methanobacteriati</taxon>
        <taxon>Methanobacteriota</taxon>
        <taxon>Thermococci</taxon>
        <taxon>Thermococcales</taxon>
        <taxon>Thermococcaceae</taxon>
        <taxon>Pyrococcus</taxon>
    </lineage>
</organism>